<comment type="function">
    <text evidence="2">Clathrin is the major protein of the polyhedral coat of coated pits and vesicles. Acts as a component of the TACC3/ch-TOG/clathrin complex proposed to contribute to stabilization of kinetochore fibers of the mitotic spindle by acting as inter-microtubule bridge (By similarity).</text>
</comment>
<comment type="subunit">
    <text evidence="1 2">Clathrin coats are formed from molecules containing 3 heavy chains and 3 light chains. Interacts with CALY; the interaction stimulates clathrin self-assembly and clathrin-mediated endocytosis (By similarity). Interacts with CKAP5 and TACC3 forming the TACC3/ch-TOG/clathrin complex located at spindle inter-microtubules bridges; the complex implicates clathrin triskelions (By similarity).</text>
</comment>
<comment type="subcellular location">
    <subcellularLocation>
        <location>Cytoplasmic vesicle membrane</location>
        <topology>Peripheral membrane protein</topology>
        <orientation>Cytoplasmic side</orientation>
    </subcellularLocation>
    <subcellularLocation>
        <location>Membrane</location>
        <location>Coated pit</location>
        <topology>Peripheral membrane protein</topology>
        <orientation>Cytoplasmic side</orientation>
    </subcellularLocation>
    <subcellularLocation>
        <location evidence="2">Cytoplasm</location>
        <location evidence="2">Cytoskeleton</location>
        <location evidence="2">Spindle</location>
    </subcellularLocation>
    <text evidence="2">Cytoplasmic face of coated pits and vesicles. In complex with TACC3 and CKAP5 (forming the TACC3/ch-TOG/clathrin complex) localized to inter-microtubule bridges in mitotic spindles.</text>
</comment>
<comment type="similarity">
    <text evidence="5">Belongs to the clathrin light chain family.</text>
</comment>
<keyword id="KW-0007">Acetylation</keyword>
<keyword id="KW-0106">Calcium</keyword>
<keyword id="KW-0131">Cell cycle</keyword>
<keyword id="KW-0132">Cell division</keyword>
<keyword id="KW-0168">Coated pit</keyword>
<keyword id="KW-0963">Cytoplasm</keyword>
<keyword id="KW-0968">Cytoplasmic vesicle</keyword>
<keyword id="KW-0206">Cytoskeleton</keyword>
<keyword id="KW-0472">Membrane</keyword>
<keyword id="KW-0498">Mitosis</keyword>
<keyword id="KW-0597">Phosphoprotein</keyword>
<keyword id="KW-1185">Reference proteome</keyword>
<reference key="1">
    <citation type="submission" date="1997-04" db="EMBL/GenBank/DDBJ databases">
        <title>E3, a hematopoietic-specific transcript directly regulated by the retinoic acid receptor alpha.</title>
        <authorList>
            <person name="Scott L.M."/>
            <person name="Mueller L."/>
            <person name="Collins S.J."/>
        </authorList>
    </citation>
    <scope>NUCLEOTIDE SEQUENCE [MRNA]</scope>
    <source>
        <strain>MDF1</strain>
    </source>
</reference>
<reference key="2">
    <citation type="journal article" date="2009" name="PLoS Biol.">
        <title>Lineage-specific biology revealed by a finished genome assembly of the mouse.</title>
        <authorList>
            <person name="Church D.M."/>
            <person name="Goodstadt L."/>
            <person name="Hillier L.W."/>
            <person name="Zody M.C."/>
            <person name="Goldstein S."/>
            <person name="She X."/>
            <person name="Bult C.J."/>
            <person name="Agarwala R."/>
            <person name="Cherry J.L."/>
            <person name="DiCuccio M."/>
            <person name="Hlavina W."/>
            <person name="Kapustin Y."/>
            <person name="Meric P."/>
            <person name="Maglott D."/>
            <person name="Birtle Z."/>
            <person name="Marques A.C."/>
            <person name="Graves T."/>
            <person name="Zhou S."/>
            <person name="Teague B."/>
            <person name="Potamousis K."/>
            <person name="Churas C."/>
            <person name="Place M."/>
            <person name="Herschleb J."/>
            <person name="Runnheim R."/>
            <person name="Forrest D."/>
            <person name="Amos-Landgraf J."/>
            <person name="Schwartz D.C."/>
            <person name="Cheng Z."/>
            <person name="Lindblad-Toh K."/>
            <person name="Eichler E.E."/>
            <person name="Ponting C.P."/>
        </authorList>
    </citation>
    <scope>NUCLEOTIDE SEQUENCE [LARGE SCALE GENOMIC DNA]</scope>
    <source>
        <strain>C57BL/6J</strain>
    </source>
</reference>
<reference key="3">
    <citation type="journal article" date="2010" name="Cell">
        <title>A tissue-specific atlas of mouse protein phosphorylation and expression.</title>
        <authorList>
            <person name="Huttlin E.L."/>
            <person name="Jedrychowski M.P."/>
            <person name="Elias J.E."/>
            <person name="Goswami T."/>
            <person name="Rad R."/>
            <person name="Beausoleil S.A."/>
            <person name="Villen J."/>
            <person name="Haas W."/>
            <person name="Sowa M.E."/>
            <person name="Gygi S.P."/>
        </authorList>
    </citation>
    <scope>PHOSPHORYLATION [LARGE SCALE ANALYSIS] AT SER-193 AND SER-223</scope>
    <scope>IDENTIFICATION BY MASS SPECTROMETRY [LARGE SCALE ANALYSIS]</scope>
    <source>
        <tissue>Brain</tissue>
        <tissue>Brown adipose tissue</tissue>
        <tissue>Heart</tissue>
        <tissue>Kidney</tissue>
        <tissue>Liver</tissue>
        <tissue>Lung</tissue>
        <tissue>Pancreas</tissue>
        <tissue>Spleen</tissue>
        <tissue>Testis</tissue>
    </source>
</reference>
<reference key="4">
    <citation type="journal article" date="2013" name="Mol. Cell">
        <title>SIRT5-mediated lysine desuccinylation impacts diverse metabolic pathways.</title>
        <authorList>
            <person name="Park J."/>
            <person name="Chen Y."/>
            <person name="Tishkoff D.X."/>
            <person name="Peng C."/>
            <person name="Tan M."/>
            <person name="Dai L."/>
            <person name="Xie Z."/>
            <person name="Zhang Y."/>
            <person name="Zwaans B.M."/>
            <person name="Skinner M.E."/>
            <person name="Lombard D.B."/>
            <person name="Zhao Y."/>
        </authorList>
    </citation>
    <scope>ACETYLATION [LARGE SCALE ANALYSIS] AT LYS-229</scope>
    <scope>IDENTIFICATION BY MASS SPECTROMETRY [LARGE SCALE ANALYSIS]</scope>
    <source>
        <tissue>Embryonic fibroblast</tissue>
    </source>
</reference>
<proteinExistence type="evidence at protein level"/>
<feature type="chain" id="PRO_0000205768" description="Clathrin light chain A">
    <location>
        <begin position="1"/>
        <end position="235"/>
    </location>
</feature>
<feature type="region of interest" description="Disordered" evidence="4">
    <location>
        <begin position="1"/>
        <end position="32"/>
    </location>
</feature>
<feature type="region of interest" description="Involved in binding clathrin heavy chain">
    <location>
        <begin position="99"/>
        <end position="161"/>
    </location>
</feature>
<feature type="compositionally biased region" description="Gly residues" evidence="4">
    <location>
        <begin position="13"/>
        <end position="25"/>
    </location>
</feature>
<feature type="modified residue" description="Phosphoserine" evidence="2">
    <location>
        <position position="104"/>
    </location>
</feature>
<feature type="modified residue" description="Phosphoserine" evidence="6">
    <location>
        <position position="193"/>
    </location>
</feature>
<feature type="modified residue" description="N6-acetyllysine" evidence="3">
    <location>
        <position position="210"/>
    </location>
</feature>
<feature type="modified residue" description="Phosphoserine" evidence="6">
    <location>
        <position position="223"/>
    </location>
</feature>
<feature type="modified residue" description="N6-acetyllysine" evidence="7">
    <location>
        <position position="229"/>
    </location>
</feature>
<feature type="sequence conflict" description="In Ref. 1; AAB51286." evidence="5" ref="1">
    <original>A</original>
    <variation>D</variation>
    <location>
        <position position="9"/>
    </location>
</feature>
<feature type="sequence conflict" description="In Ref. 1; AAB51286." evidence="5" ref="1">
    <original>QQ</original>
    <variation>HE</variation>
    <location>
        <begin position="38"/>
        <end position="39"/>
    </location>
</feature>
<feature type="sequence conflict" description="In Ref. 1; AAB51286." evidence="5" ref="1">
    <original>A</original>
    <variation>G</variation>
    <location>
        <position position="68"/>
    </location>
</feature>
<feature type="sequence conflict" description="In Ref. 1; AAB51286." evidence="5" ref="1">
    <original>VAD</original>
    <variation>AAE</variation>
    <location>
        <begin position="162"/>
        <end position="164"/>
    </location>
</feature>
<feature type="sequence conflict" description="In Ref. 1; AAB51286." evidence="5" ref="1">
    <original>L</original>
    <variation>V</variation>
    <location>
        <position position="175"/>
    </location>
</feature>
<feature type="sequence conflict" description="In Ref. 1; AAB51286." evidence="5" ref="1">
    <original>R</original>
    <variation>P</variation>
    <location>
        <position position="203"/>
    </location>
</feature>
<evidence type="ECO:0000250" key="1"/>
<evidence type="ECO:0000250" key="2">
    <source>
        <dbReference type="UniProtKB" id="P09496"/>
    </source>
</evidence>
<evidence type="ECO:0000250" key="3">
    <source>
        <dbReference type="UniProtKB" id="Q6IRU5"/>
    </source>
</evidence>
<evidence type="ECO:0000256" key="4">
    <source>
        <dbReference type="SAM" id="MobiDB-lite"/>
    </source>
</evidence>
<evidence type="ECO:0000305" key="5"/>
<evidence type="ECO:0007744" key="6">
    <source>
    </source>
</evidence>
<evidence type="ECO:0007744" key="7">
    <source>
    </source>
</evidence>
<name>CLCA_MOUSE</name>
<organism>
    <name type="scientific">Mus musculus</name>
    <name type="common">Mouse</name>
    <dbReference type="NCBI Taxonomy" id="10090"/>
    <lineage>
        <taxon>Eukaryota</taxon>
        <taxon>Metazoa</taxon>
        <taxon>Chordata</taxon>
        <taxon>Craniata</taxon>
        <taxon>Vertebrata</taxon>
        <taxon>Euteleostomi</taxon>
        <taxon>Mammalia</taxon>
        <taxon>Eutheria</taxon>
        <taxon>Euarchontoglires</taxon>
        <taxon>Glires</taxon>
        <taxon>Rodentia</taxon>
        <taxon>Myomorpha</taxon>
        <taxon>Muroidea</taxon>
        <taxon>Muridae</taxon>
        <taxon>Murinae</taxon>
        <taxon>Mus</taxon>
        <taxon>Mus</taxon>
    </lineage>
</organism>
<gene>
    <name type="primary">Clta</name>
</gene>
<accession>O08585</accession>
<protein>
    <recommendedName>
        <fullName>Clathrin light chain A</fullName>
        <shortName>Lca</shortName>
    </recommendedName>
</protein>
<sequence>MAELDPFGAPAGAPGGPALGNGVAGAGEEDPAAAFLAQQESEIAGIENDEAFAILDGGAPGRATRRAAGGPDAVDGVMNGEYYQESNGPTDSYAAISEVDRLQSEPESIRKWREEQTERLEALDANSRKQEAEWKEKAIKELEEWYARQDEQLQKTKANNRVADEAFYKQPFADLIGYVAAEEAFVNDIDESSPGTEWERVARLCDFNPKSSKQAKDVSRMRSVLISLKQAPLVH</sequence>
<dbReference type="EMBL" id="U91848">
    <property type="protein sequence ID" value="AAB51286.1"/>
    <property type="molecule type" value="mRNA"/>
</dbReference>
<dbReference type="EMBL" id="AL732563">
    <property type="status" value="NOT_ANNOTATED_CDS"/>
    <property type="molecule type" value="Genomic_DNA"/>
</dbReference>
<dbReference type="SMR" id="O08585"/>
<dbReference type="FunCoup" id="O08585">
    <property type="interactions" value="2638"/>
</dbReference>
<dbReference type="STRING" id="10090.ENSMUSP00000103483"/>
<dbReference type="GlyGen" id="O08585">
    <property type="glycosylation" value="2 sites, 1 O-linked glycan (1 site)"/>
</dbReference>
<dbReference type="iPTMnet" id="O08585"/>
<dbReference type="PhosphoSitePlus" id="O08585"/>
<dbReference type="SwissPalm" id="O08585"/>
<dbReference type="jPOST" id="O08585"/>
<dbReference type="PaxDb" id="10090-ENSMUSP00000103481"/>
<dbReference type="ProteomicsDB" id="283281"/>
<dbReference type="Pumba" id="O08585"/>
<dbReference type="AGR" id="MGI:894297"/>
<dbReference type="MGI" id="MGI:894297">
    <property type="gene designation" value="Clta"/>
</dbReference>
<dbReference type="eggNOG" id="KOG4031">
    <property type="taxonomic scope" value="Eukaryota"/>
</dbReference>
<dbReference type="InParanoid" id="O08585"/>
<dbReference type="Reactome" id="R-MMU-177504">
    <property type="pathway name" value="Retrograde neurotrophin signalling"/>
</dbReference>
<dbReference type="Reactome" id="R-MMU-190873">
    <property type="pathway name" value="Gap junction degradation"/>
</dbReference>
<dbReference type="Reactome" id="R-MMU-196025">
    <property type="pathway name" value="Formation of annular gap junctions"/>
</dbReference>
<dbReference type="Reactome" id="R-MMU-2132295">
    <property type="pathway name" value="MHC class II antigen presentation"/>
</dbReference>
<dbReference type="Reactome" id="R-MMU-432720">
    <property type="pathway name" value="Lysosome Vesicle Biogenesis"/>
</dbReference>
<dbReference type="Reactome" id="R-MMU-432722">
    <property type="pathway name" value="Golgi Associated Vesicle Biogenesis"/>
</dbReference>
<dbReference type="Reactome" id="R-MMU-437239">
    <property type="pathway name" value="Recycling pathway of L1"/>
</dbReference>
<dbReference type="Reactome" id="R-MMU-5099900">
    <property type="pathway name" value="WNT5A-dependent internalization of FZD4"/>
</dbReference>
<dbReference type="Reactome" id="R-MMU-5140745">
    <property type="pathway name" value="WNT5A-dependent internalization of FZD2, FZD5 and ROR2"/>
</dbReference>
<dbReference type="Reactome" id="R-MMU-8856825">
    <property type="pathway name" value="Cargo recognition for clathrin-mediated endocytosis"/>
</dbReference>
<dbReference type="Reactome" id="R-MMU-8856828">
    <property type="pathway name" value="Clathrin-mediated endocytosis"/>
</dbReference>
<dbReference type="Reactome" id="R-MMU-8866427">
    <property type="pathway name" value="VLDLR internalisation and degradation"/>
</dbReference>
<dbReference type="Reactome" id="R-MMU-8964038">
    <property type="pathway name" value="LDL clearance"/>
</dbReference>
<dbReference type="CD-CODE" id="CE726F99">
    <property type="entry name" value="Postsynaptic density"/>
</dbReference>
<dbReference type="ChiTaRS" id="Clta">
    <property type="organism name" value="mouse"/>
</dbReference>
<dbReference type="PRO" id="PR:O08585"/>
<dbReference type="Proteomes" id="UP000000589">
    <property type="component" value="Unplaced"/>
</dbReference>
<dbReference type="RNAct" id="O08585">
    <property type="molecule type" value="protein"/>
</dbReference>
<dbReference type="GO" id="GO:0030132">
    <property type="term" value="C:clathrin coat of coated pit"/>
    <property type="evidence" value="ECO:0007669"/>
    <property type="project" value="InterPro"/>
</dbReference>
<dbReference type="GO" id="GO:0030130">
    <property type="term" value="C:clathrin coat of trans-Golgi network vesicle"/>
    <property type="evidence" value="ECO:0007669"/>
    <property type="project" value="InterPro"/>
</dbReference>
<dbReference type="GO" id="GO:0031410">
    <property type="term" value="C:cytoplasmic vesicle"/>
    <property type="evidence" value="ECO:0000314"/>
    <property type="project" value="BHF-UCL"/>
</dbReference>
<dbReference type="GO" id="GO:0098978">
    <property type="term" value="C:glutamatergic synapse"/>
    <property type="evidence" value="ECO:0000314"/>
    <property type="project" value="SynGO"/>
</dbReference>
<dbReference type="GO" id="GO:0098843">
    <property type="term" value="C:postsynaptic endocytic zone"/>
    <property type="evidence" value="ECO:0000314"/>
    <property type="project" value="SynGO"/>
</dbReference>
<dbReference type="GO" id="GO:0005819">
    <property type="term" value="C:spindle"/>
    <property type="evidence" value="ECO:0007669"/>
    <property type="project" value="UniProtKB-SubCell"/>
</dbReference>
<dbReference type="GO" id="GO:0005198">
    <property type="term" value="F:structural molecule activity"/>
    <property type="evidence" value="ECO:0007669"/>
    <property type="project" value="InterPro"/>
</dbReference>
<dbReference type="GO" id="GO:0051301">
    <property type="term" value="P:cell division"/>
    <property type="evidence" value="ECO:0007669"/>
    <property type="project" value="UniProtKB-KW"/>
</dbReference>
<dbReference type="GO" id="GO:0006886">
    <property type="term" value="P:intracellular protein transport"/>
    <property type="evidence" value="ECO:0007669"/>
    <property type="project" value="InterPro"/>
</dbReference>
<dbReference type="GO" id="GO:0016192">
    <property type="term" value="P:vesicle-mediated transport"/>
    <property type="evidence" value="ECO:0007669"/>
    <property type="project" value="InterPro"/>
</dbReference>
<dbReference type="InterPro" id="IPR000996">
    <property type="entry name" value="Clathrin_L-chain"/>
</dbReference>
<dbReference type="PANTHER" id="PTHR10639">
    <property type="entry name" value="CLATHRIN LIGHT CHAIN"/>
    <property type="match status" value="1"/>
</dbReference>
<dbReference type="PANTHER" id="PTHR10639:SF1">
    <property type="entry name" value="CLATHRIN LIGHT CHAIN A"/>
    <property type="match status" value="1"/>
</dbReference>
<dbReference type="Pfam" id="PF01086">
    <property type="entry name" value="Clathrin_lg_ch"/>
    <property type="match status" value="1"/>
</dbReference>
<dbReference type="PROSITE" id="PS00224">
    <property type="entry name" value="CLATHRIN_LIGHT_CHN_1"/>
    <property type="match status" value="1"/>
</dbReference>
<dbReference type="PROSITE" id="PS00581">
    <property type="entry name" value="CLATHRIN_LIGHT_CHN_2"/>
    <property type="match status" value="1"/>
</dbReference>